<gene>
    <name evidence="3" type="primary">xacC</name>
    <name evidence="5" type="ordered locus">HVO_B0030</name>
</gene>
<dbReference type="EC" id="3.1.1.15" evidence="2"/>
<dbReference type="EC" id="3.1.1.68" evidence="2"/>
<dbReference type="EMBL" id="CP001953">
    <property type="protein sequence ID" value="ADE01475.1"/>
    <property type="molecule type" value="Genomic_DNA"/>
</dbReference>
<dbReference type="RefSeq" id="WP_004041124.1">
    <property type="nucleotide sequence ID" value="NC_013964.1"/>
</dbReference>
<dbReference type="SMR" id="D4GP31"/>
<dbReference type="PaxDb" id="309800-C498_01605"/>
<dbReference type="EnsemblBacteria" id="ADE01475">
    <property type="protein sequence ID" value="ADE01475"/>
    <property type="gene ID" value="HVO_B0030"/>
</dbReference>
<dbReference type="GeneID" id="8919047"/>
<dbReference type="KEGG" id="hvo:HVO_B0030"/>
<dbReference type="PATRIC" id="fig|309800.29.peg.307"/>
<dbReference type="eggNOG" id="arCOG05370">
    <property type="taxonomic scope" value="Archaea"/>
</dbReference>
<dbReference type="HOGENOM" id="CLU_036110_3_1_2"/>
<dbReference type="OrthoDB" id="341532at2157"/>
<dbReference type="BioCyc" id="MetaCyc:MONOMER-20630"/>
<dbReference type="BRENDA" id="3.1.1.15">
    <property type="organism ID" value="2561"/>
</dbReference>
<dbReference type="BRENDA" id="3.1.1.68">
    <property type="organism ID" value="2561"/>
</dbReference>
<dbReference type="SABIO-RK" id="D4GP31"/>
<dbReference type="Proteomes" id="UP000008243">
    <property type="component" value="Plasmid pHV3"/>
</dbReference>
<dbReference type="GO" id="GO:0005509">
    <property type="term" value="F:calcium ion binding"/>
    <property type="evidence" value="ECO:0007669"/>
    <property type="project" value="TreeGrafter"/>
</dbReference>
<dbReference type="GO" id="GO:0004341">
    <property type="term" value="F:gluconolactonase activity"/>
    <property type="evidence" value="ECO:0007669"/>
    <property type="project" value="TreeGrafter"/>
</dbReference>
<dbReference type="GO" id="GO:0050021">
    <property type="term" value="F:L-arabinonolactonase activity"/>
    <property type="evidence" value="ECO:0007669"/>
    <property type="project" value="UniProtKB-EC"/>
</dbReference>
<dbReference type="GO" id="GO:0050402">
    <property type="term" value="F:xylono-1,4-lactonase activity"/>
    <property type="evidence" value="ECO:0007669"/>
    <property type="project" value="UniProtKB-EC"/>
</dbReference>
<dbReference type="GO" id="GO:0019568">
    <property type="term" value="P:arabinose catabolic process"/>
    <property type="evidence" value="ECO:0007669"/>
    <property type="project" value="UniProtKB-KW"/>
</dbReference>
<dbReference type="GO" id="GO:0042732">
    <property type="term" value="P:D-xylose metabolic process"/>
    <property type="evidence" value="ECO:0007669"/>
    <property type="project" value="UniProtKB-KW"/>
</dbReference>
<dbReference type="GO" id="GO:0019853">
    <property type="term" value="P:L-ascorbic acid biosynthetic process"/>
    <property type="evidence" value="ECO:0007669"/>
    <property type="project" value="TreeGrafter"/>
</dbReference>
<dbReference type="Gene3D" id="2.120.10.30">
    <property type="entry name" value="TolB, C-terminal domain"/>
    <property type="match status" value="1"/>
</dbReference>
<dbReference type="InterPro" id="IPR011042">
    <property type="entry name" value="6-blade_b-propeller_TolB-like"/>
</dbReference>
<dbReference type="InterPro" id="IPR013658">
    <property type="entry name" value="SGL"/>
</dbReference>
<dbReference type="InterPro" id="IPR005511">
    <property type="entry name" value="SMP-30"/>
</dbReference>
<dbReference type="PANTHER" id="PTHR10907">
    <property type="entry name" value="REGUCALCIN"/>
    <property type="match status" value="1"/>
</dbReference>
<dbReference type="PANTHER" id="PTHR10907:SF47">
    <property type="entry name" value="REGUCALCIN"/>
    <property type="match status" value="1"/>
</dbReference>
<dbReference type="Pfam" id="PF08450">
    <property type="entry name" value="SGL"/>
    <property type="match status" value="1"/>
</dbReference>
<dbReference type="PRINTS" id="PR01790">
    <property type="entry name" value="SMP30FAMILY"/>
</dbReference>
<dbReference type="SUPFAM" id="SSF63829">
    <property type="entry name" value="Calcium-dependent phosphotriesterase"/>
    <property type="match status" value="1"/>
</dbReference>
<keyword id="KW-0054">Arabinose catabolism</keyword>
<keyword id="KW-0119">Carbohydrate metabolism</keyword>
<keyword id="KW-0170">Cobalt</keyword>
<keyword id="KW-0378">Hydrolase</keyword>
<keyword id="KW-0460">Magnesium</keyword>
<keyword id="KW-0464">Manganese</keyword>
<keyword id="KW-0479">Metal-binding</keyword>
<keyword id="KW-0614">Plasmid</keyword>
<keyword id="KW-1185">Reference proteome</keyword>
<keyword id="KW-0859">Xylose metabolism</keyword>
<sequence length="291" mass="31454">MTVTRVVDTSCRLGEGPVWHPDEKRLYWVDIESGRLHRYDPETGAHDCPVETSVIAGVTIQRDGSLLAFMDRGRVGRVVDGDRRESARIVDSPTRFNDVIADPAGRVFCGTMPSDTAGGRLFRLDTDGTVTTVETGVGIPNGMGFTRDRERFYFTETEARTVYRYAYDEETGAVSARERFVESPETPGLPDGMTVDSAGHIWSARWEGGCVVEYDADGTELGRFDVPTEKVTSVAFGGPDLDSLYVTTAGGDGDGSAGEGDESTGDAAGALFRLDVAATGRPEFRSDVRLG</sequence>
<reference key="1">
    <citation type="journal article" date="2010" name="PLoS ONE">
        <title>The complete genome sequence of Haloferax volcanii DS2, a model archaeon.</title>
        <authorList>
            <person name="Hartman A.L."/>
            <person name="Norais C."/>
            <person name="Badger J.H."/>
            <person name="Delmas S."/>
            <person name="Haldenby S."/>
            <person name="Madupu R."/>
            <person name="Robinson J."/>
            <person name="Khouri H."/>
            <person name="Ren Q."/>
            <person name="Lowe T.M."/>
            <person name="Maupin-Furlow J."/>
            <person name="Pohlschroder M."/>
            <person name="Daniels C."/>
            <person name="Pfeiffer F."/>
            <person name="Allers T."/>
            <person name="Eisen J.A."/>
        </authorList>
    </citation>
    <scope>NUCLEOTIDE SEQUENCE [LARGE SCALE GENOMIC DNA]</scope>
    <source>
        <strain>ATCC 29605 / DSM 3757 / JCM 8879 / NBRC 14742 / NCIMB 2012 / VKM B-1768 / DS2</strain>
    </source>
</reference>
<reference key="2">
    <citation type="journal article" date="2017" name="FEMS Microbiol. Lett.">
        <title>Characterization of a pentonolactonase involved in D-xylose and L-arabinose catabolism in the haloarchaeon Haloferax volcanii.</title>
        <authorList>
            <person name="Sutter J.M."/>
            <person name="Johnsen U."/>
            <person name="Schoenheit P."/>
        </authorList>
    </citation>
    <scope>FUNCTION</scope>
    <scope>CATALYTIC ACTIVITY</scope>
    <scope>COFACTOR</scope>
    <scope>BIOPHYSICOCHEMICAL PROPERTIES</scope>
    <scope>PATHWAY</scope>
    <scope>SUBUNIT</scope>
    <scope>INDUCTION</scope>
    <scope>DISRUPTION PHENOTYPE</scope>
    <source>
        <strain>DS2 / DS70 / H26</strain>
    </source>
</reference>
<comment type="function">
    <text evidence="2">Pentonolactonase involved in D-arabinose and D-xylose catabolism. Catalyzes the hydrolysis of both L-arabino-gamma-lactone and D-xylono-gamma-lactone to the corresponding acids. Can also hydrolyze D-galactono-gamma-lactone and D-glucono-delta-lactone.</text>
</comment>
<comment type="catalytic activity">
    <reaction evidence="2">
        <text>L-arabinono-1,4-lactone + H2O = L-arabinonate + H(+)</text>
        <dbReference type="Rhea" id="RHEA:16217"/>
        <dbReference type="ChEBI" id="CHEBI:15377"/>
        <dbReference type="ChEBI" id="CHEBI:15378"/>
        <dbReference type="ChEBI" id="CHEBI:16501"/>
        <dbReference type="ChEBI" id="CHEBI:17100"/>
        <dbReference type="EC" id="3.1.1.15"/>
    </reaction>
</comment>
<comment type="catalytic activity">
    <reaction evidence="2">
        <text>D-xylono-1,4-lactone + H2O = D-xylonate + H(+)</text>
        <dbReference type="Rhea" id="RHEA:18341"/>
        <dbReference type="ChEBI" id="CHEBI:15377"/>
        <dbReference type="ChEBI" id="CHEBI:15378"/>
        <dbReference type="ChEBI" id="CHEBI:16392"/>
        <dbReference type="ChEBI" id="CHEBI:17746"/>
        <dbReference type="EC" id="3.1.1.68"/>
    </reaction>
</comment>
<comment type="cofactor">
    <cofactor evidence="2">
        <name>a divalent metal cation</name>
        <dbReference type="ChEBI" id="CHEBI:60240"/>
    </cofactor>
    <text evidence="1 2">Binds 1 divalent metal cation per subunit (By similarity). Most active with Co(2+), Mg(2+) or Mn(2+). Has weaker activity with Fe(2+), Ni(2+) or Zn(2+) (PubMed:28854683).</text>
</comment>
<comment type="biophysicochemical properties">
    <kinetics>
        <KM evidence="2">37.1 mM for L-arabino-gamma-lactone</KM>
        <KM evidence="2">10.9 mM for D-xylono-gamma-lactone</KM>
        <Vmax evidence="2">761.0 umol/min/mg enzyme with L-arabino-gamma-lactone as substrate</Vmax>
        <Vmax evidence="2">437.0 umol/min/mg enzyme with D-xylono-gamma-lactone as substrate</Vmax>
    </kinetics>
</comment>
<comment type="pathway">
    <text evidence="2">Carbohydrate degradation.</text>
</comment>
<comment type="subunit">
    <text evidence="2">Monomer.</text>
</comment>
<comment type="induction">
    <text evidence="2">Transcriptionally up-regulated by both L-arabinose and D-xylose via the pentose-specific regulator XacR.</text>
</comment>
<comment type="disruption phenotype">
    <text evidence="2">Deletion mutant shows restricted growth on L-arabinose but grows on D-xylose as the wild type.</text>
</comment>
<comment type="similarity">
    <text evidence="4">Belongs to the SMP-30/CGR1 family.</text>
</comment>
<proteinExistence type="evidence at protein level"/>
<organism>
    <name type="scientific">Haloferax volcanii (strain ATCC 29605 / DSM 3757 / JCM 8879 / NBRC 14742 / NCIMB 2012 / VKM B-1768 / DS2)</name>
    <name type="common">Halobacterium volcanii</name>
    <dbReference type="NCBI Taxonomy" id="309800"/>
    <lineage>
        <taxon>Archaea</taxon>
        <taxon>Methanobacteriati</taxon>
        <taxon>Methanobacteriota</taxon>
        <taxon>Stenosarchaea group</taxon>
        <taxon>Halobacteria</taxon>
        <taxon>Halobacteriales</taxon>
        <taxon>Haloferacaceae</taxon>
        <taxon>Haloferax</taxon>
    </lineage>
</organism>
<feature type="chain" id="PRO_0000449387" description="Pentonolactonase XacC">
    <location>
        <begin position="1"/>
        <end position="291"/>
    </location>
</feature>
<feature type="active site" description="Proton donor/acceptor" evidence="1">
    <location>
        <position position="191"/>
    </location>
</feature>
<feature type="binding site" evidence="1">
    <location>
        <position position="15"/>
    </location>
    <ligand>
        <name>a divalent metal cation</name>
        <dbReference type="ChEBI" id="CHEBI:60240"/>
    </ligand>
</feature>
<feature type="binding site" evidence="1">
    <location>
        <position position="141"/>
    </location>
    <ligand>
        <name>a divalent metal cation</name>
        <dbReference type="ChEBI" id="CHEBI:60240"/>
    </ligand>
</feature>
<feature type="binding site" evidence="1">
    <location>
        <position position="191"/>
    </location>
    <ligand>
        <name>a divalent metal cation</name>
        <dbReference type="ChEBI" id="CHEBI:60240"/>
    </ligand>
</feature>
<geneLocation type="plasmid">
    <name>pHV3</name>
</geneLocation>
<protein>
    <recommendedName>
        <fullName evidence="4">Pentonolactonase XacC</fullName>
        <ecNumber evidence="2">3.1.1.15</ecNumber>
        <ecNumber evidence="2">3.1.1.68</ecNumber>
    </recommendedName>
    <alternativeName>
        <fullName evidence="4">L-arabinonolactonase</fullName>
    </alternativeName>
    <alternativeName>
        <fullName evidence="4">Xylono-1,4-lactonase</fullName>
    </alternativeName>
</protein>
<name>XACC_HALVD</name>
<accession>D4GP31</accession>
<accession>L9VI99</accession>
<evidence type="ECO:0000250" key="1">
    <source>
        <dbReference type="UniProtKB" id="Q15493"/>
    </source>
</evidence>
<evidence type="ECO:0000269" key="2">
    <source>
    </source>
</evidence>
<evidence type="ECO:0000303" key="3">
    <source>
    </source>
</evidence>
<evidence type="ECO:0000305" key="4"/>
<evidence type="ECO:0000312" key="5">
    <source>
        <dbReference type="EMBL" id="ADE01475.1"/>
    </source>
</evidence>